<name>LPXA_XANOR</name>
<sequence length="263" mass="28132">MRDQAPLIHPTAVIDPSAQLASDVRVGAFSLIGADVHIGAGTEVGPHCSIHGPTRIGRNNRFIGHAAIGGEPQDKKYAGERTELVIGDDNVIREFVTINRGTRGGGGITTVGNDNWMLAYTHVAHDCHVGNHCVFSNNTTLAGHVTVGDYVIISGFAGAHQFCRIGAHAFLGMGALTNGDVPPFTMVGRESLGRPRGINSEGLKRRGFDAERITAIKRAYRTLYVAGLPLTDAKLQLAEQAKSSDDVRGMLEFIEAAERSLLR</sequence>
<feature type="chain" id="PRO_0000302611" description="Acyl-[acyl-carrier-protein]--UDP-N-acetylglucosamine O-acyltransferase">
    <location>
        <begin position="1"/>
        <end position="263"/>
    </location>
</feature>
<keyword id="KW-0012">Acyltransferase</keyword>
<keyword id="KW-0963">Cytoplasm</keyword>
<keyword id="KW-0441">Lipid A biosynthesis</keyword>
<keyword id="KW-0444">Lipid biosynthesis</keyword>
<keyword id="KW-0443">Lipid metabolism</keyword>
<keyword id="KW-1185">Reference proteome</keyword>
<keyword id="KW-0677">Repeat</keyword>
<keyword id="KW-0808">Transferase</keyword>
<evidence type="ECO:0000255" key="1">
    <source>
        <dbReference type="HAMAP-Rule" id="MF_00387"/>
    </source>
</evidence>
<proteinExistence type="inferred from homology"/>
<protein>
    <recommendedName>
        <fullName evidence="1">Acyl-[acyl-carrier-protein]--UDP-N-acetylglucosamine O-acyltransferase</fullName>
        <shortName evidence="1">UDP-N-acetylglucosamine acyltransferase</shortName>
        <ecNumber evidence="1">2.3.1.129</ecNumber>
    </recommendedName>
</protein>
<accession>Q5H1F2</accession>
<reference key="1">
    <citation type="journal article" date="2005" name="Nucleic Acids Res.">
        <title>The genome sequence of Xanthomonas oryzae pathovar oryzae KACC10331, the bacterial blight pathogen of rice.</title>
        <authorList>
            <person name="Lee B.-M."/>
            <person name="Park Y.-J."/>
            <person name="Park D.-S."/>
            <person name="Kang H.-W."/>
            <person name="Kim J.-G."/>
            <person name="Song E.-S."/>
            <person name="Park I.-C."/>
            <person name="Yoon U.-H."/>
            <person name="Hahn J.-H."/>
            <person name="Koo B.-S."/>
            <person name="Lee G.-B."/>
            <person name="Kim H."/>
            <person name="Park H.-S."/>
            <person name="Yoon K.-O."/>
            <person name="Kim J.-H."/>
            <person name="Jung C.-H."/>
            <person name="Koh N.-H."/>
            <person name="Seo J.-S."/>
            <person name="Go S.-J."/>
        </authorList>
    </citation>
    <scope>NUCLEOTIDE SEQUENCE [LARGE SCALE GENOMIC DNA]</scope>
    <source>
        <strain>KACC10331 / KXO85</strain>
    </source>
</reference>
<dbReference type="EC" id="2.3.1.129" evidence="1"/>
<dbReference type="EMBL" id="AE013598">
    <property type="protein sequence ID" value="AAW75219.1"/>
    <property type="molecule type" value="Genomic_DNA"/>
</dbReference>
<dbReference type="SMR" id="Q5H1F2"/>
<dbReference type="STRING" id="291331.XOO1965"/>
<dbReference type="KEGG" id="xoo:XOO1965"/>
<dbReference type="HOGENOM" id="CLU_061249_0_0_6"/>
<dbReference type="UniPathway" id="UPA00359">
    <property type="reaction ID" value="UER00477"/>
</dbReference>
<dbReference type="Proteomes" id="UP000006735">
    <property type="component" value="Chromosome"/>
</dbReference>
<dbReference type="GO" id="GO:0005737">
    <property type="term" value="C:cytoplasm"/>
    <property type="evidence" value="ECO:0007669"/>
    <property type="project" value="UniProtKB-SubCell"/>
</dbReference>
<dbReference type="GO" id="GO:0016020">
    <property type="term" value="C:membrane"/>
    <property type="evidence" value="ECO:0007669"/>
    <property type="project" value="GOC"/>
</dbReference>
<dbReference type="GO" id="GO:0008780">
    <property type="term" value="F:acyl-[acyl-carrier-protein]-UDP-N-acetylglucosamine O-acyltransferase activity"/>
    <property type="evidence" value="ECO:0007669"/>
    <property type="project" value="UniProtKB-UniRule"/>
</dbReference>
<dbReference type="GO" id="GO:0009245">
    <property type="term" value="P:lipid A biosynthetic process"/>
    <property type="evidence" value="ECO:0007669"/>
    <property type="project" value="UniProtKB-UniRule"/>
</dbReference>
<dbReference type="CDD" id="cd03351">
    <property type="entry name" value="LbH_UDP-GlcNAc_AT"/>
    <property type="match status" value="1"/>
</dbReference>
<dbReference type="Gene3D" id="2.160.10.10">
    <property type="entry name" value="Hexapeptide repeat proteins"/>
    <property type="match status" value="1"/>
</dbReference>
<dbReference type="Gene3D" id="1.20.1180.10">
    <property type="entry name" value="Udp N-acetylglucosamine O-acyltransferase, C-terminal domain"/>
    <property type="match status" value="1"/>
</dbReference>
<dbReference type="HAMAP" id="MF_00387">
    <property type="entry name" value="LpxA"/>
    <property type="match status" value="1"/>
</dbReference>
<dbReference type="InterPro" id="IPR029098">
    <property type="entry name" value="Acetyltransf_C"/>
</dbReference>
<dbReference type="InterPro" id="IPR037157">
    <property type="entry name" value="Acetyltransf_C_sf"/>
</dbReference>
<dbReference type="InterPro" id="IPR001451">
    <property type="entry name" value="Hexapep"/>
</dbReference>
<dbReference type="InterPro" id="IPR010137">
    <property type="entry name" value="Lipid_A_LpxA"/>
</dbReference>
<dbReference type="InterPro" id="IPR011004">
    <property type="entry name" value="Trimer_LpxA-like_sf"/>
</dbReference>
<dbReference type="NCBIfam" id="TIGR01852">
    <property type="entry name" value="lipid_A_lpxA"/>
    <property type="match status" value="1"/>
</dbReference>
<dbReference type="NCBIfam" id="NF003657">
    <property type="entry name" value="PRK05289.1"/>
    <property type="match status" value="1"/>
</dbReference>
<dbReference type="PANTHER" id="PTHR43480">
    <property type="entry name" value="ACYL-[ACYL-CARRIER-PROTEIN]--UDP-N-ACETYLGLUCOSAMINE O-ACYLTRANSFERASE"/>
    <property type="match status" value="1"/>
</dbReference>
<dbReference type="PANTHER" id="PTHR43480:SF1">
    <property type="entry name" value="ACYL-[ACYL-CARRIER-PROTEIN]--UDP-N-ACETYLGLUCOSAMINE O-ACYLTRANSFERASE, MITOCHONDRIAL-RELATED"/>
    <property type="match status" value="1"/>
</dbReference>
<dbReference type="Pfam" id="PF13720">
    <property type="entry name" value="Acetyltransf_11"/>
    <property type="match status" value="1"/>
</dbReference>
<dbReference type="Pfam" id="PF00132">
    <property type="entry name" value="Hexapep"/>
    <property type="match status" value="1"/>
</dbReference>
<dbReference type="PIRSF" id="PIRSF000456">
    <property type="entry name" value="UDP-GlcNAc_acltr"/>
    <property type="match status" value="1"/>
</dbReference>
<dbReference type="SUPFAM" id="SSF51161">
    <property type="entry name" value="Trimeric LpxA-like enzymes"/>
    <property type="match status" value="1"/>
</dbReference>
<comment type="function">
    <text evidence="1">Involved in the biosynthesis of lipid A, a phosphorylated glycolipid that anchors the lipopolysaccharide to the outer membrane of the cell.</text>
</comment>
<comment type="catalytic activity">
    <reaction evidence="1">
        <text>a (3R)-hydroxyacyl-[ACP] + UDP-N-acetyl-alpha-D-glucosamine = a UDP-3-O-[(3R)-3-hydroxyacyl]-N-acetyl-alpha-D-glucosamine + holo-[ACP]</text>
        <dbReference type="Rhea" id="RHEA:67812"/>
        <dbReference type="Rhea" id="RHEA-COMP:9685"/>
        <dbReference type="Rhea" id="RHEA-COMP:9945"/>
        <dbReference type="ChEBI" id="CHEBI:57705"/>
        <dbReference type="ChEBI" id="CHEBI:64479"/>
        <dbReference type="ChEBI" id="CHEBI:78827"/>
        <dbReference type="ChEBI" id="CHEBI:173225"/>
        <dbReference type="EC" id="2.3.1.129"/>
    </reaction>
</comment>
<comment type="pathway">
    <text evidence="1">Glycolipid biosynthesis; lipid IV(A) biosynthesis; lipid IV(A) from (3R)-3-hydroxytetradecanoyl-[acyl-carrier-protein] and UDP-N-acetyl-alpha-D-glucosamine: step 1/6.</text>
</comment>
<comment type="subunit">
    <text evidence="1">Homotrimer.</text>
</comment>
<comment type="subcellular location">
    <subcellularLocation>
        <location evidence="1">Cytoplasm</location>
    </subcellularLocation>
</comment>
<comment type="similarity">
    <text evidence="1">Belongs to the transferase hexapeptide repeat family. LpxA subfamily.</text>
</comment>
<gene>
    <name evidence="1" type="primary">lpxA</name>
    <name type="ordered locus">XOO1965</name>
</gene>
<organism>
    <name type="scientific">Xanthomonas oryzae pv. oryzae (strain KACC10331 / KXO85)</name>
    <dbReference type="NCBI Taxonomy" id="291331"/>
    <lineage>
        <taxon>Bacteria</taxon>
        <taxon>Pseudomonadati</taxon>
        <taxon>Pseudomonadota</taxon>
        <taxon>Gammaproteobacteria</taxon>
        <taxon>Lysobacterales</taxon>
        <taxon>Lysobacteraceae</taxon>
        <taxon>Xanthomonas</taxon>
    </lineage>
</organism>